<organism>
    <name type="scientific">Buchnera aphidicola subsp. Melaphis rhois</name>
    <dbReference type="NCBI Taxonomy" id="118103"/>
    <lineage>
        <taxon>Bacteria</taxon>
        <taxon>Pseudomonadati</taxon>
        <taxon>Pseudomonadota</taxon>
        <taxon>Gammaproteobacteria</taxon>
        <taxon>Enterobacterales</taxon>
        <taxon>Erwiniaceae</taxon>
        <taxon>Buchnera</taxon>
    </lineage>
</organism>
<comment type="catalytic activity">
    <reaction evidence="1">
        <text>L-histidinol phosphate + 2-oxoglutarate = 3-(imidazol-4-yl)-2-oxopropyl phosphate + L-glutamate</text>
        <dbReference type="Rhea" id="RHEA:23744"/>
        <dbReference type="ChEBI" id="CHEBI:16810"/>
        <dbReference type="ChEBI" id="CHEBI:29985"/>
        <dbReference type="ChEBI" id="CHEBI:57766"/>
        <dbReference type="ChEBI" id="CHEBI:57980"/>
        <dbReference type="EC" id="2.6.1.9"/>
    </reaction>
</comment>
<comment type="cofactor">
    <cofactor evidence="1">
        <name>pyridoxal 5'-phosphate</name>
        <dbReference type="ChEBI" id="CHEBI:597326"/>
    </cofactor>
</comment>
<comment type="pathway">
    <text evidence="1">Amino-acid biosynthesis; L-histidine biosynthesis; L-histidine from 5-phospho-alpha-D-ribose 1-diphosphate: step 7/9.</text>
</comment>
<comment type="subunit">
    <text evidence="1">Homodimer.</text>
</comment>
<comment type="similarity">
    <text evidence="1">Belongs to the class-II pyridoxal-phosphate-dependent aminotransferase family. Histidinol-phosphate aminotransferase subfamily.</text>
</comment>
<feature type="chain" id="PRO_0000153332" description="Histidinol-phosphate aminotransferase">
    <location>
        <begin position="1"/>
        <end position="359"/>
    </location>
</feature>
<feature type="modified residue" description="N6-(pyridoxal phosphate)lysine" evidence="1">
    <location>
        <position position="212"/>
    </location>
</feature>
<name>HIS8_BUCMH</name>
<gene>
    <name evidence="1" type="primary">hisC</name>
</gene>
<evidence type="ECO:0000255" key="1">
    <source>
        <dbReference type="HAMAP-Rule" id="MF_01023"/>
    </source>
</evidence>
<reference key="1">
    <citation type="submission" date="2002-01" db="EMBL/GenBank/DDBJ databases">
        <title>Levels of selection on genes of mutualistic endosymbionts.</title>
        <authorList>
            <person name="Moran N.A."/>
            <person name="Mira A."/>
        </authorList>
    </citation>
    <scope>NUCLEOTIDE SEQUENCE [GENOMIC DNA]</scope>
</reference>
<sequence length="359" mass="41269">MNIKKLVRKDIRELIPYQSARKIGGKGDIWLNANEFPEFNNIKLNNIILNRYPECQPEQLTSCYSSYIGINKSNILITRGIDEAIELLIKTFCNPQNEKIIFCPPTYDMYNISAKIIGIKSYEVPLLNFSWQLDINNIAKYISDAKLIYICNPNNPTGNLINYQDIITLLNITLGKTLVIVDEAYIEFSPIHSLTNLIDTYPNLVILRTLSKAFALAGLRCGFILTNVNIVKFLLKVINPYPIPIPTTSIAVQFLSKNNINEMRNRIFDLTLNRFWLVNKLKSMNNCVEHVFNSFANYILVRFYNSRKVFDILSKKGIIVRDQSNKLHLSRCLRISIGTSKECLEVVRVIQKINSLCVY</sequence>
<proteinExistence type="inferred from homology"/>
<keyword id="KW-0028">Amino-acid biosynthesis</keyword>
<keyword id="KW-0032">Aminotransferase</keyword>
<keyword id="KW-0368">Histidine biosynthesis</keyword>
<keyword id="KW-0663">Pyridoxal phosphate</keyword>
<keyword id="KW-0808">Transferase</keyword>
<dbReference type="EC" id="2.6.1.9" evidence="1"/>
<dbReference type="EMBL" id="AF465531">
    <property type="protein sequence ID" value="AAO33046.1"/>
    <property type="molecule type" value="Genomic_DNA"/>
</dbReference>
<dbReference type="RefSeq" id="WP_158336310.1">
    <property type="nucleotide sequence ID" value="NZ_CP033004.1"/>
</dbReference>
<dbReference type="SMR" id="Q84I52"/>
<dbReference type="OrthoDB" id="9813612at2"/>
<dbReference type="UniPathway" id="UPA00031">
    <property type="reaction ID" value="UER00012"/>
</dbReference>
<dbReference type="GO" id="GO:0004400">
    <property type="term" value="F:histidinol-phosphate transaminase activity"/>
    <property type="evidence" value="ECO:0007669"/>
    <property type="project" value="UniProtKB-UniRule"/>
</dbReference>
<dbReference type="GO" id="GO:0030170">
    <property type="term" value="F:pyridoxal phosphate binding"/>
    <property type="evidence" value="ECO:0007669"/>
    <property type="project" value="InterPro"/>
</dbReference>
<dbReference type="GO" id="GO:0000105">
    <property type="term" value="P:L-histidine biosynthetic process"/>
    <property type="evidence" value="ECO:0007669"/>
    <property type="project" value="UniProtKB-UniRule"/>
</dbReference>
<dbReference type="CDD" id="cd00609">
    <property type="entry name" value="AAT_like"/>
    <property type="match status" value="1"/>
</dbReference>
<dbReference type="Gene3D" id="3.90.1150.10">
    <property type="entry name" value="Aspartate Aminotransferase, domain 1"/>
    <property type="match status" value="1"/>
</dbReference>
<dbReference type="Gene3D" id="3.40.640.10">
    <property type="entry name" value="Type I PLP-dependent aspartate aminotransferase-like (Major domain)"/>
    <property type="match status" value="1"/>
</dbReference>
<dbReference type="HAMAP" id="MF_01023">
    <property type="entry name" value="HisC_aminotrans_2"/>
    <property type="match status" value="1"/>
</dbReference>
<dbReference type="InterPro" id="IPR001917">
    <property type="entry name" value="Aminotrans_II_pyridoxalP_BS"/>
</dbReference>
<dbReference type="InterPro" id="IPR004839">
    <property type="entry name" value="Aminotransferase_I/II_large"/>
</dbReference>
<dbReference type="InterPro" id="IPR005861">
    <property type="entry name" value="HisP_aminotrans"/>
</dbReference>
<dbReference type="InterPro" id="IPR015424">
    <property type="entry name" value="PyrdxlP-dep_Trfase"/>
</dbReference>
<dbReference type="InterPro" id="IPR015421">
    <property type="entry name" value="PyrdxlP-dep_Trfase_major"/>
</dbReference>
<dbReference type="InterPro" id="IPR015422">
    <property type="entry name" value="PyrdxlP-dep_Trfase_small"/>
</dbReference>
<dbReference type="NCBIfam" id="TIGR01141">
    <property type="entry name" value="hisC"/>
    <property type="match status" value="1"/>
</dbReference>
<dbReference type="PANTHER" id="PTHR42885:SF2">
    <property type="entry name" value="HISTIDINOL-PHOSPHATE AMINOTRANSFERASE"/>
    <property type="match status" value="1"/>
</dbReference>
<dbReference type="PANTHER" id="PTHR42885">
    <property type="entry name" value="HISTIDINOL-PHOSPHATE AMINOTRANSFERASE-RELATED"/>
    <property type="match status" value="1"/>
</dbReference>
<dbReference type="Pfam" id="PF00155">
    <property type="entry name" value="Aminotran_1_2"/>
    <property type="match status" value="1"/>
</dbReference>
<dbReference type="SUPFAM" id="SSF53383">
    <property type="entry name" value="PLP-dependent transferases"/>
    <property type="match status" value="1"/>
</dbReference>
<dbReference type="PROSITE" id="PS00599">
    <property type="entry name" value="AA_TRANSFER_CLASS_2"/>
    <property type="match status" value="1"/>
</dbReference>
<accession>Q84I52</accession>
<protein>
    <recommendedName>
        <fullName evidence="1">Histidinol-phosphate aminotransferase</fullName>
        <ecNumber evidence="1">2.6.1.9</ecNumber>
    </recommendedName>
    <alternativeName>
        <fullName evidence="1">Imidazole acetol-phosphate transaminase</fullName>
    </alternativeName>
</protein>